<feature type="signal peptide" evidence="3">
    <location>
        <begin position="1"/>
        <end position="27"/>
    </location>
</feature>
<feature type="chain" id="PRO_0000014659" description="CD166 antigen">
    <location>
        <begin position="28"/>
        <end position="583"/>
    </location>
</feature>
<feature type="topological domain" description="Extracellular" evidence="3">
    <location>
        <begin position="28"/>
        <end position="527"/>
    </location>
</feature>
<feature type="transmembrane region" description="Helical" evidence="3">
    <location>
        <begin position="528"/>
        <end position="549"/>
    </location>
</feature>
<feature type="topological domain" description="Cytoplasmic" evidence="3">
    <location>
        <begin position="550"/>
        <end position="583"/>
    </location>
</feature>
<feature type="domain" description="Ig-like V-type 1">
    <location>
        <begin position="28"/>
        <end position="120"/>
    </location>
</feature>
<feature type="domain" description="Ig-like V-type 2">
    <location>
        <begin position="125"/>
        <end position="234"/>
    </location>
</feature>
<feature type="domain" description="Ig-like C2-type 1">
    <location>
        <begin position="245"/>
        <end position="328"/>
    </location>
</feature>
<feature type="domain" description="Ig-like C2-type 2">
    <location>
        <begin position="333"/>
        <end position="409"/>
    </location>
</feature>
<feature type="domain" description="Ig-like C2-type 3">
    <location>
        <begin position="416"/>
        <end position="501"/>
    </location>
</feature>
<feature type="region of interest" description="Disordered" evidence="5">
    <location>
        <begin position="562"/>
        <end position="583"/>
    </location>
</feature>
<feature type="compositionally biased region" description="Basic and acidic residues" evidence="5">
    <location>
        <begin position="569"/>
        <end position="583"/>
    </location>
</feature>
<feature type="glycosylation site" description="N-linked (GlcNAc...) asparagine" evidence="6 13">
    <location>
        <position position="91"/>
    </location>
</feature>
<feature type="glycosylation site" description="N-linked (GlcNAc...) asparagine" evidence="10 13">
    <location>
        <position position="95"/>
    </location>
</feature>
<feature type="glycosylation site" description="N-linked (GlcNAc...) asparagine" evidence="6">
    <location>
        <position position="167"/>
    </location>
</feature>
<feature type="glycosylation site" description="N-linked (GlcNAc...) asparagine" evidence="10">
    <location>
        <position position="265"/>
    </location>
</feature>
<feature type="glycosylation site" description="N-linked (GlcNAc...) asparagine" evidence="3">
    <location>
        <position position="306"/>
    </location>
</feature>
<feature type="glycosylation site" description="N-linked (GlcNAc...) asparagine" evidence="3">
    <location>
        <position position="361"/>
    </location>
</feature>
<feature type="glycosylation site" description="N-linked (GlcNAc...) asparagine" evidence="13 14">
    <location>
        <position position="457"/>
    </location>
</feature>
<feature type="glycosylation site" description="N-linked (GlcNAc...) asparagine" evidence="6 13">
    <location>
        <position position="480"/>
    </location>
</feature>
<feature type="glycosylation site" description="N-linked (GlcNAc...) asparagine" evidence="6 10">
    <location>
        <position position="499"/>
    </location>
</feature>
<feature type="disulfide bond" evidence="4 30">
    <location>
        <begin position="43"/>
        <end position="113"/>
    </location>
</feature>
<feature type="disulfide bond" evidence="4 30">
    <location>
        <begin position="157"/>
        <end position="220"/>
    </location>
</feature>
<feature type="disulfide bond" evidence="4">
    <location>
        <begin position="270"/>
        <end position="313"/>
    </location>
</feature>
<feature type="disulfide bond" evidence="4">
    <location>
        <begin position="354"/>
        <end position="392"/>
    </location>
</feature>
<feature type="disulfide bond" evidence="4">
    <location>
        <begin position="435"/>
        <end position="485"/>
    </location>
</feature>
<feature type="splice variant" id="VSP_053529" description="In isoform 4." evidence="23">
    <location>
        <begin position="1"/>
        <end position="191"/>
    </location>
</feature>
<feature type="splice variant" id="VSP_053530" description="In isoform 3." evidence="24 25">
    <original>KQ</original>
    <variation>SK</variation>
    <location>
        <begin position="132"/>
        <end position="133"/>
    </location>
</feature>
<feature type="splice variant" id="VSP_053531" description="In isoform 3." evidence="24 25">
    <location>
        <begin position="134"/>
        <end position="583"/>
    </location>
</feature>
<feature type="splice variant" id="VSP_053532" description="In isoform 4." evidence="23">
    <location>
        <begin position="244"/>
        <end position="330"/>
    </location>
</feature>
<feature type="splice variant" id="VSP_021797" description="In isoform 2." evidence="23 27">
    <original>ISIPEHDEADEISD</original>
    <variation>N</variation>
    <location>
        <begin position="503"/>
        <end position="516"/>
    </location>
</feature>
<feature type="sequence variant" id="VAR_029514" description="In dbSNP:rs10933819.">
    <original>G</original>
    <variation>D</variation>
    <location>
        <position position="229"/>
    </location>
</feature>
<feature type="sequence variant" id="VAR_003907" description="In dbSNP:rs1044240.">
    <original>N</original>
    <variation>S</variation>
    <location>
        <position position="258"/>
    </location>
</feature>
<feature type="sequence variant" id="VAR_003908" description="In dbSNP:rs1044243." evidence="20">
    <original>T</original>
    <variation>M</variation>
    <location>
        <position position="301"/>
    </location>
</feature>
<feature type="sequence variant" id="VAR_029515" description="In dbSNP:rs12629872.">
    <original>L</original>
    <variation>M</variation>
    <location>
        <position position="315"/>
    </location>
</feature>
<feature type="sequence variant" id="VAR_029516" description="In dbSNP:rs2291375.">
    <original>V</original>
    <variation>M</variation>
    <location>
        <position position="352"/>
    </location>
</feature>
<feature type="sequence variant" id="VAR_049856" description="In dbSNP:rs34926152.">
    <original>M</original>
    <variation>I</variation>
    <location>
        <position position="367"/>
    </location>
</feature>
<feature type="strand" evidence="31">
    <location>
        <begin position="30"/>
        <end position="34"/>
    </location>
</feature>
<feature type="strand" evidence="31">
    <location>
        <begin position="39"/>
        <end position="41"/>
    </location>
</feature>
<feature type="strand" evidence="31">
    <location>
        <begin position="51"/>
        <end position="59"/>
    </location>
</feature>
<feature type="strand" evidence="31">
    <location>
        <begin position="65"/>
        <end position="72"/>
    </location>
</feature>
<feature type="turn" evidence="31">
    <location>
        <begin position="73"/>
        <end position="75"/>
    </location>
</feature>
<feature type="strand" evidence="31">
    <location>
        <begin position="78"/>
        <end position="80"/>
    </location>
</feature>
<feature type="helix" evidence="31">
    <location>
        <begin position="84"/>
        <end position="86"/>
    </location>
</feature>
<feature type="turn" evidence="31">
    <location>
        <begin position="87"/>
        <end position="89"/>
    </location>
</feature>
<feature type="strand" evidence="31">
    <location>
        <begin position="90"/>
        <end position="92"/>
    </location>
</feature>
<feature type="strand" evidence="31">
    <location>
        <begin position="98"/>
        <end position="102"/>
    </location>
</feature>
<feature type="helix" evidence="31">
    <location>
        <begin position="105"/>
        <end position="107"/>
    </location>
</feature>
<feature type="strand" evidence="31">
    <location>
        <begin position="109"/>
        <end position="117"/>
    </location>
</feature>
<feature type="strand" evidence="31">
    <location>
        <begin position="120"/>
        <end position="132"/>
    </location>
</feature>
<feature type="strand" evidence="31">
    <location>
        <begin position="138"/>
        <end position="141"/>
    </location>
</feature>
<feature type="strand" evidence="31">
    <location>
        <begin position="144"/>
        <end position="148"/>
    </location>
</feature>
<feature type="strand" evidence="31">
    <location>
        <begin position="152"/>
        <end position="164"/>
    </location>
</feature>
<feature type="strand" evidence="31">
    <location>
        <begin position="167"/>
        <end position="172"/>
    </location>
</feature>
<feature type="turn" evidence="31">
    <location>
        <begin position="181"/>
        <end position="183"/>
    </location>
</feature>
<feature type="strand" evidence="31">
    <location>
        <begin position="184"/>
        <end position="192"/>
    </location>
</feature>
<feature type="turn" evidence="31">
    <location>
        <begin position="194"/>
        <end position="196"/>
    </location>
</feature>
<feature type="strand" evidence="31">
    <location>
        <begin position="199"/>
        <end position="207"/>
    </location>
</feature>
<feature type="helix" evidence="31">
    <location>
        <begin position="211"/>
        <end position="213"/>
    </location>
</feature>
<feature type="strand" evidence="31">
    <location>
        <begin position="218"/>
        <end position="226"/>
    </location>
</feature>
<feature type="strand" evidence="31">
    <location>
        <begin position="229"/>
        <end position="234"/>
    </location>
</feature>
<feature type="strand" evidence="31">
    <location>
        <begin position="241"/>
        <end position="243"/>
    </location>
</feature>
<proteinExistence type="evidence at protein level"/>
<dbReference type="EMBL" id="L38608">
    <property type="protein sequence ID" value="AAB59499.1"/>
    <property type="molecule type" value="mRNA"/>
</dbReference>
<dbReference type="EMBL" id="AY644765">
    <property type="protein sequence ID" value="AAV28819.1"/>
    <property type="molecule type" value="mRNA"/>
</dbReference>
<dbReference type="EMBL" id="DQ486139">
    <property type="protein sequence ID" value="ABF48405.1"/>
    <property type="molecule type" value="mRNA"/>
</dbReference>
<dbReference type="EMBL" id="DQ486140">
    <property type="protein sequence ID" value="ABF48406.1"/>
    <property type="molecule type" value="mRNA"/>
</dbReference>
<dbReference type="EMBL" id="AK127617">
    <property type="protein sequence ID" value="BAC87059.1"/>
    <property type="molecule type" value="mRNA"/>
</dbReference>
<dbReference type="EMBL" id="AK300362">
    <property type="protein sequence ID" value="BAG62102.1"/>
    <property type="molecule type" value="mRNA"/>
</dbReference>
<dbReference type="EMBL" id="AK316113">
    <property type="protein sequence ID" value="BAH14484.1"/>
    <property type="molecule type" value="mRNA"/>
</dbReference>
<dbReference type="EMBL" id="AC023602">
    <property type="status" value="NOT_ANNOTATED_CDS"/>
    <property type="molecule type" value="Genomic_DNA"/>
</dbReference>
<dbReference type="EMBL" id="AC078806">
    <property type="status" value="NOT_ANNOTATED_CDS"/>
    <property type="molecule type" value="Genomic_DNA"/>
</dbReference>
<dbReference type="EMBL" id="AC133476">
    <property type="status" value="NOT_ANNOTATED_CDS"/>
    <property type="molecule type" value="Genomic_DNA"/>
</dbReference>
<dbReference type="EMBL" id="BC057809">
    <property type="protein sequence ID" value="AAH57809.1"/>
    <property type="molecule type" value="mRNA"/>
</dbReference>
<dbReference type="EMBL" id="BC137096">
    <property type="protein sequence ID" value="AAI37097.1"/>
    <property type="molecule type" value="mRNA"/>
</dbReference>
<dbReference type="EMBL" id="BC137097">
    <property type="protein sequence ID" value="AAI37098.1"/>
    <property type="molecule type" value="mRNA"/>
</dbReference>
<dbReference type="EMBL" id="Y10183">
    <property type="protein sequence ID" value="CAA71256.1"/>
    <property type="molecule type" value="mRNA"/>
</dbReference>
<dbReference type="CCDS" id="CCDS33810.1">
    <molecule id="Q13740-1"/>
</dbReference>
<dbReference type="CCDS" id="CCDS58841.1">
    <molecule id="Q13740-2"/>
</dbReference>
<dbReference type="PIR" id="I39428">
    <property type="entry name" value="I39428"/>
</dbReference>
<dbReference type="RefSeq" id="NP_001230209.1">
    <molecule id="Q13740-2"/>
    <property type="nucleotide sequence ID" value="NM_001243280.2"/>
</dbReference>
<dbReference type="RefSeq" id="NP_001230212.1">
    <molecule id="Q13740-3"/>
    <property type="nucleotide sequence ID" value="NM_001243283.2"/>
</dbReference>
<dbReference type="RefSeq" id="NP_001618.2">
    <molecule id="Q13740-1"/>
    <property type="nucleotide sequence ID" value="NM_001627.4"/>
</dbReference>
<dbReference type="PDB" id="5A2F">
    <property type="method" value="X-ray"/>
    <property type="resolution" value="1.86 A"/>
    <property type="chains" value="A=1-583"/>
</dbReference>
<dbReference type="PDBsum" id="5A2F"/>
<dbReference type="SMR" id="Q13740"/>
<dbReference type="BioGRID" id="106716">
    <property type="interactions" value="120"/>
</dbReference>
<dbReference type="DIP" id="DIP-39093N"/>
<dbReference type="FunCoup" id="Q13740">
    <property type="interactions" value="840"/>
</dbReference>
<dbReference type="IntAct" id="Q13740">
    <property type="interactions" value="42"/>
</dbReference>
<dbReference type="MINT" id="Q13740"/>
<dbReference type="STRING" id="9606.ENSP00000305988"/>
<dbReference type="ChEMBL" id="CHEMBL4665584"/>
<dbReference type="TCDB" id="8.A.23.1.10">
    <property type="family name" value="the basigin (basigin) family"/>
</dbReference>
<dbReference type="GlyConnect" id="1085">
    <property type="glycosylation" value="66 N-Linked glycans (8 sites)"/>
</dbReference>
<dbReference type="GlyCosmos" id="Q13740">
    <property type="glycosylation" value="9 sites, 73 glycans"/>
</dbReference>
<dbReference type="GlyGen" id="Q13740">
    <property type="glycosylation" value="11 sites, 161 N-linked glycans (9 sites), 1 O-linked glycan (1 site)"/>
</dbReference>
<dbReference type="iPTMnet" id="Q13740"/>
<dbReference type="MetOSite" id="Q13740"/>
<dbReference type="PhosphoSitePlus" id="Q13740"/>
<dbReference type="SwissPalm" id="Q13740"/>
<dbReference type="BioMuta" id="ALCAM"/>
<dbReference type="DMDM" id="118572629"/>
<dbReference type="CPTAC" id="CPTAC-1502"/>
<dbReference type="CPTAC" id="CPTAC-1503"/>
<dbReference type="jPOST" id="Q13740"/>
<dbReference type="MassIVE" id="Q13740"/>
<dbReference type="PaxDb" id="9606-ENSP00000305988"/>
<dbReference type="PeptideAtlas" id="Q13740"/>
<dbReference type="ProteomicsDB" id="5128"/>
<dbReference type="ProteomicsDB" id="59670">
    <molecule id="Q13740-1"/>
</dbReference>
<dbReference type="ProteomicsDB" id="59671">
    <molecule id="Q13740-2"/>
</dbReference>
<dbReference type="ProteomicsDB" id="68208"/>
<dbReference type="Pumba" id="Q13740"/>
<dbReference type="ABCD" id="Q13740">
    <property type="antibodies" value="25 sequenced antibodies"/>
</dbReference>
<dbReference type="Antibodypedia" id="2625">
    <property type="antibodies" value="904 antibodies from 41 providers"/>
</dbReference>
<dbReference type="CPTC" id="Q13740">
    <property type="antibodies" value="2 antibodies"/>
</dbReference>
<dbReference type="DNASU" id="214"/>
<dbReference type="Ensembl" id="ENST00000306107.9">
    <molecule id="Q13740-1"/>
    <property type="protein sequence ID" value="ENSP00000305988.5"/>
    <property type="gene ID" value="ENSG00000170017.12"/>
</dbReference>
<dbReference type="Ensembl" id="ENST00000472644.6">
    <molecule id="Q13740-2"/>
    <property type="protein sequence ID" value="ENSP00000419236.2"/>
    <property type="gene ID" value="ENSG00000170017.12"/>
</dbReference>
<dbReference type="GeneID" id="214"/>
<dbReference type="KEGG" id="hsa:214"/>
<dbReference type="MANE-Select" id="ENST00000306107.9">
    <property type="protein sequence ID" value="ENSP00000305988.5"/>
    <property type="RefSeq nucleotide sequence ID" value="NM_001627.4"/>
    <property type="RefSeq protein sequence ID" value="NP_001618.2"/>
</dbReference>
<dbReference type="UCSC" id="uc003dvx.4">
    <molecule id="Q13740-1"/>
    <property type="organism name" value="human"/>
</dbReference>
<dbReference type="AGR" id="HGNC:400"/>
<dbReference type="CTD" id="214"/>
<dbReference type="DisGeNET" id="214"/>
<dbReference type="GeneCards" id="ALCAM"/>
<dbReference type="HGNC" id="HGNC:400">
    <property type="gene designation" value="ALCAM"/>
</dbReference>
<dbReference type="HPA" id="ENSG00000170017">
    <property type="expression patterns" value="Tissue enriched (parathyroid)"/>
</dbReference>
<dbReference type="MIM" id="601662">
    <property type="type" value="gene"/>
</dbReference>
<dbReference type="neXtProt" id="NX_Q13740"/>
<dbReference type="OpenTargets" id="ENSG00000170017"/>
<dbReference type="PharmGKB" id="PA24691"/>
<dbReference type="VEuPathDB" id="HostDB:ENSG00000170017"/>
<dbReference type="eggNOG" id="ENOG502RMQM">
    <property type="taxonomic scope" value="Eukaryota"/>
</dbReference>
<dbReference type="GeneTree" id="ENSGT00940000156881"/>
<dbReference type="InParanoid" id="Q13740"/>
<dbReference type="OMA" id="FACSVTY"/>
<dbReference type="OrthoDB" id="9945628at2759"/>
<dbReference type="PAN-GO" id="Q13740">
    <property type="GO annotations" value="2 GO annotations based on evolutionary models"/>
</dbReference>
<dbReference type="PhylomeDB" id="Q13740"/>
<dbReference type="TreeFam" id="TF321859"/>
<dbReference type="PathwayCommons" id="Q13740"/>
<dbReference type="Reactome" id="R-HSA-373760">
    <property type="pathway name" value="L1CAM interactions"/>
</dbReference>
<dbReference type="SignaLink" id="Q13740"/>
<dbReference type="SIGNOR" id="Q13740"/>
<dbReference type="BioGRID-ORCS" id="214">
    <property type="hits" value="13 hits in 1162 CRISPR screens"/>
</dbReference>
<dbReference type="ChiTaRS" id="ALCAM">
    <property type="organism name" value="human"/>
</dbReference>
<dbReference type="EvolutionaryTrace" id="Q13740"/>
<dbReference type="GeneWiki" id="ALCAM"/>
<dbReference type="GenomeRNAi" id="214"/>
<dbReference type="Pharos" id="Q13740">
    <property type="development level" value="Tbio"/>
</dbReference>
<dbReference type="PRO" id="PR:Q13740"/>
<dbReference type="Proteomes" id="UP000005640">
    <property type="component" value="Chromosome 3"/>
</dbReference>
<dbReference type="RNAct" id="Q13740">
    <property type="molecule type" value="protein"/>
</dbReference>
<dbReference type="Bgee" id="ENSG00000170017">
    <property type="expression patterns" value="Expressed in bronchial epithelial cell and 205 other cell types or tissues"/>
</dbReference>
<dbReference type="ExpressionAtlas" id="Q13740">
    <property type="expression patterns" value="baseline and differential"/>
</dbReference>
<dbReference type="GO" id="GO:0030424">
    <property type="term" value="C:axon"/>
    <property type="evidence" value="ECO:0000250"/>
    <property type="project" value="UniProtKB"/>
</dbReference>
<dbReference type="GO" id="GO:0030425">
    <property type="term" value="C:dendrite"/>
    <property type="evidence" value="ECO:0007669"/>
    <property type="project" value="UniProtKB-SubCell"/>
</dbReference>
<dbReference type="GO" id="GO:0009897">
    <property type="term" value="C:external side of plasma membrane"/>
    <property type="evidence" value="ECO:0007669"/>
    <property type="project" value="Ensembl"/>
</dbReference>
<dbReference type="GO" id="GO:0070062">
    <property type="term" value="C:extracellular exosome"/>
    <property type="evidence" value="ECO:0007005"/>
    <property type="project" value="UniProtKB"/>
</dbReference>
<dbReference type="GO" id="GO:0005925">
    <property type="term" value="C:focal adhesion"/>
    <property type="evidence" value="ECO:0007005"/>
    <property type="project" value="UniProtKB"/>
</dbReference>
<dbReference type="GO" id="GO:0001772">
    <property type="term" value="C:immunological synapse"/>
    <property type="evidence" value="ECO:0000314"/>
    <property type="project" value="UniProtKB"/>
</dbReference>
<dbReference type="GO" id="GO:0043025">
    <property type="term" value="C:neuronal cell body"/>
    <property type="evidence" value="ECO:0007669"/>
    <property type="project" value="Ensembl"/>
</dbReference>
<dbReference type="GO" id="GO:0005886">
    <property type="term" value="C:plasma membrane"/>
    <property type="evidence" value="ECO:0000314"/>
    <property type="project" value="UniProtKB"/>
</dbReference>
<dbReference type="GO" id="GO:0042802">
    <property type="term" value="F:identical protein binding"/>
    <property type="evidence" value="ECO:0000353"/>
    <property type="project" value="IntAct"/>
</dbReference>
<dbReference type="GO" id="GO:0005102">
    <property type="term" value="F:signaling receptor binding"/>
    <property type="evidence" value="ECO:0000304"/>
    <property type="project" value="ProtInc"/>
</dbReference>
<dbReference type="GO" id="GO:0002250">
    <property type="term" value="P:adaptive immune response"/>
    <property type="evidence" value="ECO:0007669"/>
    <property type="project" value="UniProtKB-KW"/>
</dbReference>
<dbReference type="GO" id="GO:0048846">
    <property type="term" value="P:axon extension involved in axon guidance"/>
    <property type="evidence" value="ECO:0000250"/>
    <property type="project" value="UniProtKB"/>
</dbReference>
<dbReference type="GO" id="GO:0007155">
    <property type="term" value="P:cell adhesion"/>
    <property type="evidence" value="ECO:0000250"/>
    <property type="project" value="UniProtKB"/>
</dbReference>
<dbReference type="GO" id="GO:0007157">
    <property type="term" value="P:heterophilic cell-cell adhesion via plasma membrane cell adhesion molecules"/>
    <property type="evidence" value="ECO:0000315"/>
    <property type="project" value="UniProtKB"/>
</dbReference>
<dbReference type="GO" id="GO:0008045">
    <property type="term" value="P:motor neuron axon guidance"/>
    <property type="evidence" value="ECO:0007669"/>
    <property type="project" value="Ensembl"/>
</dbReference>
<dbReference type="GO" id="GO:1990138">
    <property type="term" value="P:neuron projection extension"/>
    <property type="evidence" value="ECO:0000250"/>
    <property type="project" value="UniProtKB"/>
</dbReference>
<dbReference type="GO" id="GO:0031290">
    <property type="term" value="P:retinal ganglion cell axon guidance"/>
    <property type="evidence" value="ECO:0000250"/>
    <property type="project" value="UniProtKB"/>
</dbReference>
<dbReference type="GO" id="GO:0007165">
    <property type="term" value="P:signal transduction"/>
    <property type="evidence" value="ECO:0000304"/>
    <property type="project" value="ProtInc"/>
</dbReference>
<dbReference type="CDD" id="cd00096">
    <property type="entry name" value="Ig"/>
    <property type="match status" value="2"/>
</dbReference>
<dbReference type="DisProt" id="DP02515"/>
<dbReference type="FunFam" id="2.60.40.10:FF:001428">
    <property type="entry name" value="CD166 antigen"/>
    <property type="match status" value="1"/>
</dbReference>
<dbReference type="FunFam" id="2.60.40.10:FF:000351">
    <property type="entry name" value="CD166 antigen isoform X1"/>
    <property type="match status" value="1"/>
</dbReference>
<dbReference type="FunFam" id="2.60.40.10:FF:000383">
    <property type="entry name" value="CD166 antigen isoform X1"/>
    <property type="match status" value="1"/>
</dbReference>
<dbReference type="FunFam" id="2.60.40.10:FF:000384">
    <property type="entry name" value="CD166 antigen isoform X1"/>
    <property type="match status" value="1"/>
</dbReference>
<dbReference type="FunFam" id="2.60.40.10:FF:000472">
    <property type="entry name" value="CD166 antigen isoform X2"/>
    <property type="match status" value="1"/>
</dbReference>
<dbReference type="Gene3D" id="2.60.40.10">
    <property type="entry name" value="Immunoglobulins"/>
    <property type="match status" value="5"/>
</dbReference>
<dbReference type="InterPro" id="IPR013162">
    <property type="entry name" value="CD80_C2-set"/>
</dbReference>
<dbReference type="InterPro" id="IPR007110">
    <property type="entry name" value="Ig-like_dom"/>
</dbReference>
<dbReference type="InterPro" id="IPR036179">
    <property type="entry name" value="Ig-like_dom_sf"/>
</dbReference>
<dbReference type="InterPro" id="IPR013783">
    <property type="entry name" value="Ig-like_fold"/>
</dbReference>
<dbReference type="InterPro" id="IPR003599">
    <property type="entry name" value="Ig_sub"/>
</dbReference>
<dbReference type="InterPro" id="IPR003598">
    <property type="entry name" value="Ig_sub2"/>
</dbReference>
<dbReference type="InterPro" id="IPR013106">
    <property type="entry name" value="Ig_V-set"/>
</dbReference>
<dbReference type="InterPro" id="IPR051116">
    <property type="entry name" value="Surface_Rcpt/Adhesion_Mol"/>
</dbReference>
<dbReference type="PANTHER" id="PTHR11973:SF2">
    <property type="entry name" value="CD166 ANTIGEN"/>
    <property type="match status" value="1"/>
</dbReference>
<dbReference type="PANTHER" id="PTHR11973">
    <property type="entry name" value="CELL SURFACE GLYCOPROTEIN MUC18-RELATED"/>
    <property type="match status" value="1"/>
</dbReference>
<dbReference type="Pfam" id="PF08205">
    <property type="entry name" value="C2-set_2"/>
    <property type="match status" value="1"/>
</dbReference>
<dbReference type="Pfam" id="PF13927">
    <property type="entry name" value="Ig_3"/>
    <property type="match status" value="1"/>
</dbReference>
<dbReference type="SMART" id="SM00409">
    <property type="entry name" value="IG"/>
    <property type="match status" value="3"/>
</dbReference>
<dbReference type="SMART" id="SM00408">
    <property type="entry name" value="IGc2"/>
    <property type="match status" value="3"/>
</dbReference>
<dbReference type="SMART" id="SM00406">
    <property type="entry name" value="IGv"/>
    <property type="match status" value="1"/>
</dbReference>
<dbReference type="SUPFAM" id="SSF48726">
    <property type="entry name" value="Immunoglobulin"/>
    <property type="match status" value="5"/>
</dbReference>
<dbReference type="PROSITE" id="PS50835">
    <property type="entry name" value="IG_LIKE"/>
    <property type="match status" value="4"/>
</dbReference>
<name>CD166_HUMAN</name>
<gene>
    <name type="primary">ALCAM</name>
    <name evidence="26" type="synonym">MEMD</name>
</gene>
<organism>
    <name type="scientific">Homo sapiens</name>
    <name type="common">Human</name>
    <dbReference type="NCBI Taxonomy" id="9606"/>
    <lineage>
        <taxon>Eukaryota</taxon>
        <taxon>Metazoa</taxon>
        <taxon>Chordata</taxon>
        <taxon>Craniata</taxon>
        <taxon>Vertebrata</taxon>
        <taxon>Euteleostomi</taxon>
        <taxon>Mammalia</taxon>
        <taxon>Eutheria</taxon>
        <taxon>Euarchontoglires</taxon>
        <taxon>Primates</taxon>
        <taxon>Haplorrhini</taxon>
        <taxon>Catarrhini</taxon>
        <taxon>Hominidae</taxon>
        <taxon>Homo</taxon>
    </lineage>
</organism>
<comment type="function">
    <text evidence="1 7 8 9 11 17 19 20">Cell adhesion molecule that mediates both heterotypic cell-cell contacts via its interaction with CD6, as well as homotypic cell-cell contacts (PubMed:15048703, PubMed:15496415, PubMed:16352806, PubMed:23169771, PubMed:24945728, PubMed:7760007). Promotes T-cell activation and proliferation via its interactions with CD6 (PubMed:15048703, PubMed:16352806, PubMed:24945728). Contributes to the formation and maturation of the immunological synapse via its interactions with CD6 (PubMed:15294938, PubMed:16352806). Mediates homotypic interactions with cells that express ALCAM (PubMed:15496415, PubMed:16352806). Acts as a ligand for the LILRB4 receptor, enhancing LILRB4-mediated inhibition of T cell proliferation (PubMed:29263213). Required for normal hematopoietic stem cell engraftment in the bone marrow (PubMed:24740813). Mediates attachment of dendritic cells onto endothelial cells via homotypic interaction (PubMed:23169771). Inhibits endothelial cell migration and promotes endothelial tube formation via homotypic interactions (PubMed:15496415, PubMed:23169771). Required for normal organization of the lymph vessel network. Required for normal hematopoietic stem cell engraftment in the bone marrow. Plays a role in hematopoiesis; required for normal numbers of hematopoietic stem cells in bone marrow. Promotes in vitro osteoblast proliferation and differentiation (By similarity). Promotes neurite extension, axon growth and axon guidance; axons grow preferentially on surfaces that contain ALCAM. Mediates outgrowth and pathfinding for retinal ganglion cell axons (By similarity).</text>
</comment>
<comment type="function">
    <molecule>Isoform 3</molecule>
    <text evidence="9">Inhibits activities of membrane-bound isoforms by competing for the same interaction partners. Inhibits cell attachment via homotypic interactions. Promotes endothelial cell migration. Inhibits endothelial cell tube formation.</text>
</comment>
<comment type="subunit">
    <text evidence="7 11 12 17 18 20 21">Homodimer (PubMed:15048703, PubMed:16352806, PubMed:26146185, PubMed:7760007). Interacts (via extracellular domain) with CD6 (via extracellular domain) (PubMed:15048703, PubMed:16914752, PubMed:24945728, PubMed:26146185, PubMed:7760007, PubMed:8823162). Homodimerization and interaction with CD6 involve the same region and cannot occur simultaneously. The affinity for CD6 is much higher than the affinity for self-association (PubMed:15048703). Interacts (via glycosylated extracellular domain) with LGALS1 and LGALS3 (PubMed:24945728). Interaction with LGALS1 or LGALS3 inhibits interaction with CD6 (PubMed:24945728).</text>
</comment>
<comment type="interaction">
    <interactant intactId="EBI-1188108">
        <id>Q13740</id>
    </interactant>
    <interactant intactId="EBI-1188108">
        <id>Q13740</id>
        <label>ALCAM</label>
    </interactant>
    <organismsDiffer>false</organismsDiffer>
    <experiments>3</experiments>
</comment>
<comment type="interaction">
    <interactant intactId="EBI-1188108">
        <id>Q13740</id>
    </interactant>
    <interactant intactId="EBI-2873748">
        <id>P30203</id>
        <label>CD6</label>
    </interactant>
    <organismsDiffer>false</organismsDiffer>
    <experiments>6</experiments>
</comment>
<comment type="interaction">
    <interactant intactId="EBI-1188108">
        <id>Q13740</id>
    </interactant>
    <interactant intactId="EBI-1048875">
        <id>P09382</id>
        <label>LGALS1</label>
    </interactant>
    <organismsDiffer>false</organismsDiffer>
    <experiments>5</experiments>
</comment>
<comment type="interaction">
    <interactant intactId="EBI-1188108">
        <id>Q13740</id>
    </interactant>
    <interactant intactId="EBI-1170392">
        <id>P17931</id>
        <label>LGALS3</label>
    </interactant>
    <organismsDiffer>false</organismsDiffer>
    <experiments>6</experiments>
</comment>
<comment type="subcellular location">
    <subcellularLocation>
        <location evidence="7 8 11 15 16 17 20">Cell membrane</location>
        <topology evidence="28">Single-pass type I membrane protein</topology>
    </subcellularLocation>
    <subcellularLocation>
        <location evidence="2">Cell projection</location>
        <location evidence="2">Axon</location>
    </subcellularLocation>
    <subcellularLocation>
        <location evidence="2">Cell projection</location>
        <location evidence="2">Dendrite</location>
    </subcellularLocation>
    <text evidence="8 11">Detected at the immunological synapse, i.e, at the contact zone between antigen-presenting dendritic cells and T-cells (PubMed:15294938, PubMed:16352806). Colocalizes with CD6 and the TCR/CD3 complex at the immunological synapse (PubMed:15294938).</text>
</comment>
<comment type="subcellular location">
    <molecule>Isoform 3</molecule>
    <subcellularLocation>
        <location evidence="9">Secreted</location>
    </subcellularLocation>
</comment>
<comment type="alternative products">
    <event type="alternative splicing"/>
    <isoform>
        <id>Q13740-1</id>
        <name>1</name>
        <sequence type="displayed"/>
    </isoform>
    <isoform>
        <id>Q13740-2</id>
        <name>2</name>
        <sequence type="described" ref="VSP_021797"/>
    </isoform>
    <isoform>
        <id>Q13740-3</id>
        <name>3</name>
        <name>sALCAM</name>
        <sequence type="described" ref="VSP_053530 VSP_053531"/>
    </isoform>
    <isoform>
        <id>Q13740-4</id>
        <name>4</name>
        <sequence type="described" ref="VSP_053529 VSP_053532"/>
    </isoform>
</comment>
<comment type="tissue specificity">
    <text evidence="7 16 20 22">Detected on hematopoietic stem cells derived from umbilical cord blood (PubMed:24740813). Detected on lymph vessel endothelial cells, skin and tonsil (PubMed:23169771). Detected on peripheral blood monocytes (PubMed:15048703). Detected on monocyte-derived dendritic cells (at protein level) (PubMed:16352806). Detected at low levels in spleen, placenta, liver (PubMed:9502422). Expressed by activated T-cells, B-cells, monocytes and thymic epithelial cells (PubMed:7760007). Isoform 1 and isoform 3 are detected in vein and artery endothelial cells, astrocytes, keratinocytes and artery smooth muscle cells (PubMed:15496415). Expressed by neurons in the brain. Restricted expression in tumor cell lines. Detected in highly metastasizing melanoma cell lines (PubMed:9502422).</text>
</comment>
<comment type="induction">
    <text evidence="15">Up-regulated by TNF and IFNG (at protein level).</text>
</comment>
<comment type="domain">
    <text evidence="21">The CD6 binding site is located in the N-terminal Ig-like domain.</text>
</comment>
<comment type="PTM">
    <text evidence="9 29">Glycosylated.</text>
</comment>
<comment type="miscellaneous">
    <molecule>Isoform 3</molecule>
    <text evidence="28">Secreted form, inhibits isoform 1 homophilic interaction.</text>
</comment>
<accession>Q13740</accession>
<accession>B2RNS3</accession>
<accession>B4DTU0</accession>
<accession>O60892</accession>
<accession>Q1HGM8</accession>
<accession>Q1HGM9</accession>
<accession>Q6PEY4</accession>
<accession>Q6ZS95</accession>
<evidence type="ECO:0000250" key="1">
    <source>
        <dbReference type="UniProtKB" id="P42292"/>
    </source>
</evidence>
<evidence type="ECO:0000250" key="2">
    <source>
        <dbReference type="UniProtKB" id="Q61490"/>
    </source>
</evidence>
<evidence type="ECO:0000255" key="3"/>
<evidence type="ECO:0000255" key="4">
    <source>
        <dbReference type="PROSITE-ProRule" id="PRU00114"/>
    </source>
</evidence>
<evidence type="ECO:0000256" key="5">
    <source>
        <dbReference type="SAM" id="MobiDB-lite"/>
    </source>
</evidence>
<evidence type="ECO:0000269" key="6">
    <source>
    </source>
</evidence>
<evidence type="ECO:0000269" key="7">
    <source>
    </source>
</evidence>
<evidence type="ECO:0000269" key="8">
    <source>
    </source>
</evidence>
<evidence type="ECO:0000269" key="9">
    <source>
    </source>
</evidence>
<evidence type="ECO:0000269" key="10">
    <source>
    </source>
</evidence>
<evidence type="ECO:0000269" key="11">
    <source>
    </source>
</evidence>
<evidence type="ECO:0000269" key="12">
    <source>
    </source>
</evidence>
<evidence type="ECO:0000269" key="13">
    <source>
    </source>
</evidence>
<evidence type="ECO:0000269" key="14">
    <source>
    </source>
</evidence>
<evidence type="ECO:0000269" key="15">
    <source>
    </source>
</evidence>
<evidence type="ECO:0000269" key="16">
    <source>
    </source>
</evidence>
<evidence type="ECO:0000269" key="17">
    <source>
    </source>
</evidence>
<evidence type="ECO:0000269" key="18">
    <source>
    </source>
</evidence>
<evidence type="ECO:0000269" key="19">
    <source>
    </source>
</evidence>
<evidence type="ECO:0000269" key="20">
    <source>
    </source>
</evidence>
<evidence type="ECO:0000269" key="21">
    <source>
    </source>
</evidence>
<evidence type="ECO:0000269" key="22">
    <source>
    </source>
</evidence>
<evidence type="ECO:0000303" key="23">
    <source>
    </source>
</evidence>
<evidence type="ECO:0000303" key="24">
    <source>
    </source>
</evidence>
<evidence type="ECO:0000303" key="25">
    <source>
    </source>
</evidence>
<evidence type="ECO:0000303" key="26">
    <source>
    </source>
</evidence>
<evidence type="ECO:0000303" key="27">
    <source ref="3"/>
</evidence>
<evidence type="ECO:0000305" key="28"/>
<evidence type="ECO:0000305" key="29">
    <source>
    </source>
</evidence>
<evidence type="ECO:0007744" key="30">
    <source>
        <dbReference type="PDB" id="5A2F"/>
    </source>
</evidence>
<evidence type="ECO:0007829" key="31">
    <source>
        <dbReference type="PDB" id="5A2F"/>
    </source>
</evidence>
<reference key="1">
    <citation type="journal article" date="1995" name="J. Exp. Med.">
        <title>Cloning, mapping, and characterization of activated leukocyte-cell adhesion molecule (ALCAM), a CD6 ligand.</title>
        <authorList>
            <person name="Bowen M.A."/>
            <person name="Patel D.D."/>
            <person name="Li X."/>
            <person name="Modrell B."/>
            <person name="Malacko A.R."/>
            <person name="Wang W.-C."/>
            <person name="Marquardt H."/>
            <person name="Neubauer M."/>
            <person name="Pesando J.M."/>
            <person name="Francke U."/>
            <person name="Haynes B.F."/>
            <person name="Aruffo A."/>
        </authorList>
    </citation>
    <scope>NUCLEOTIDE SEQUENCE [MRNA] (ISOFORM 1)</scope>
    <scope>VARIANT MET-301</scope>
    <scope>PARTIAL PROTEIN SEQUENCE</scope>
    <scope>INTERACTION WITH CD6</scope>
    <scope>SUBUNIT</scope>
    <scope>SUBCELLULAR LOCATION</scope>
    <scope>FUNCTION</scope>
    <scope>TISSUE SPECIFICITY</scope>
</reference>
<reference key="2">
    <citation type="journal article" date="2004" name="J. Biol. Chem.">
        <title>Molecular isolation and characterization of a soluble isoform of activated leukocyte cell adhesion molecule that modulates endothelial cell function.</title>
        <authorList>
            <person name="Ikeda K."/>
            <person name="Quertermous T."/>
        </authorList>
    </citation>
    <scope>NUCLEOTIDE SEQUENCE [MRNA] (ISOFORM 3)</scope>
    <scope>SUBCELLULAR LOCATION (ISOFORM 3)</scope>
    <scope>FUNCTION (ISOFORMS 1 AND 3)</scope>
    <scope>GLYCOSYLATION</scope>
    <scope>TISSUE SPECIFICITY</scope>
</reference>
<reference key="3">
    <citation type="submission" date="2006-04" db="EMBL/GenBank/DDBJ databases">
        <title>A novel alternatively spliced variant of activated leukocyte cell adhesion molecule (ALCAM/CD166) resulting from a deletion in the extracellular membrane proximal stem.</title>
        <authorList>
            <person name="Abe Y."/>
            <person name="Bui-Thanh N.-A."/>
            <person name="Smith C.W."/>
            <person name="Ballantyne C.M."/>
            <person name="Burns A.R."/>
        </authorList>
    </citation>
    <scope>NUCLEOTIDE SEQUENCE [MRNA] (ISOFORMS 1 AND 2)</scope>
</reference>
<reference key="4">
    <citation type="journal article" date="2006" name="Nature">
        <title>The DNA sequence, annotation and analysis of human chromosome 3.</title>
        <authorList>
            <person name="Muzny D.M."/>
            <person name="Scherer S.E."/>
            <person name="Kaul R."/>
            <person name="Wang J."/>
            <person name="Yu J."/>
            <person name="Sudbrak R."/>
            <person name="Buhay C.J."/>
            <person name="Chen R."/>
            <person name="Cree A."/>
            <person name="Ding Y."/>
            <person name="Dugan-Rocha S."/>
            <person name="Gill R."/>
            <person name="Gunaratne P."/>
            <person name="Harris R.A."/>
            <person name="Hawes A.C."/>
            <person name="Hernandez J."/>
            <person name="Hodgson A.V."/>
            <person name="Hume J."/>
            <person name="Jackson A."/>
            <person name="Khan Z.M."/>
            <person name="Kovar-Smith C."/>
            <person name="Lewis L.R."/>
            <person name="Lozado R.J."/>
            <person name="Metzker M.L."/>
            <person name="Milosavljevic A."/>
            <person name="Miner G.R."/>
            <person name="Morgan M.B."/>
            <person name="Nazareth L.V."/>
            <person name="Scott G."/>
            <person name="Sodergren E."/>
            <person name="Song X.-Z."/>
            <person name="Steffen D."/>
            <person name="Wei S."/>
            <person name="Wheeler D.A."/>
            <person name="Wright M.W."/>
            <person name="Worley K.C."/>
            <person name="Yuan Y."/>
            <person name="Zhang Z."/>
            <person name="Adams C.Q."/>
            <person name="Ansari-Lari M.A."/>
            <person name="Ayele M."/>
            <person name="Brown M.J."/>
            <person name="Chen G."/>
            <person name="Chen Z."/>
            <person name="Clendenning J."/>
            <person name="Clerc-Blankenburg K.P."/>
            <person name="Chen R."/>
            <person name="Chen Z."/>
            <person name="Davis C."/>
            <person name="Delgado O."/>
            <person name="Dinh H.H."/>
            <person name="Dong W."/>
            <person name="Draper H."/>
            <person name="Ernst S."/>
            <person name="Fu G."/>
            <person name="Gonzalez-Garay M.L."/>
            <person name="Garcia D.K."/>
            <person name="Gillett W."/>
            <person name="Gu J."/>
            <person name="Hao B."/>
            <person name="Haugen E."/>
            <person name="Havlak P."/>
            <person name="He X."/>
            <person name="Hennig S."/>
            <person name="Hu S."/>
            <person name="Huang W."/>
            <person name="Jackson L.R."/>
            <person name="Jacob L.S."/>
            <person name="Kelly S.H."/>
            <person name="Kube M."/>
            <person name="Levy R."/>
            <person name="Li Z."/>
            <person name="Liu B."/>
            <person name="Liu J."/>
            <person name="Liu W."/>
            <person name="Lu J."/>
            <person name="Maheshwari M."/>
            <person name="Nguyen B.-V."/>
            <person name="Okwuonu G.O."/>
            <person name="Palmeiri A."/>
            <person name="Pasternak S."/>
            <person name="Perez L.M."/>
            <person name="Phelps K.A."/>
            <person name="Plopper F.J."/>
            <person name="Qiang B."/>
            <person name="Raymond C."/>
            <person name="Rodriguez R."/>
            <person name="Saenphimmachak C."/>
            <person name="Santibanez J."/>
            <person name="Shen H."/>
            <person name="Shen Y."/>
            <person name="Subramanian S."/>
            <person name="Tabor P.E."/>
            <person name="Verduzco D."/>
            <person name="Waldron L."/>
            <person name="Wang J."/>
            <person name="Wang J."/>
            <person name="Wang Q."/>
            <person name="Williams G.A."/>
            <person name="Wong G.K.-S."/>
            <person name="Yao Z."/>
            <person name="Zhang J."/>
            <person name="Zhang X."/>
            <person name="Zhao G."/>
            <person name="Zhou J."/>
            <person name="Zhou Y."/>
            <person name="Nelson D."/>
            <person name="Lehrach H."/>
            <person name="Reinhardt R."/>
            <person name="Naylor S.L."/>
            <person name="Yang H."/>
            <person name="Olson M."/>
            <person name="Weinstock G."/>
            <person name="Gibbs R.A."/>
        </authorList>
    </citation>
    <scope>NUCLEOTIDE SEQUENCE [LARGE SCALE GENOMIC DNA]</scope>
</reference>
<reference key="5">
    <citation type="journal article" date="2004" name="Nat. Genet.">
        <title>Complete sequencing and characterization of 21,243 full-length human cDNAs.</title>
        <authorList>
            <person name="Ota T."/>
            <person name="Suzuki Y."/>
            <person name="Nishikawa T."/>
            <person name="Otsuki T."/>
            <person name="Sugiyama T."/>
            <person name="Irie R."/>
            <person name="Wakamatsu A."/>
            <person name="Hayashi K."/>
            <person name="Sato H."/>
            <person name="Nagai K."/>
            <person name="Kimura K."/>
            <person name="Makita H."/>
            <person name="Sekine M."/>
            <person name="Obayashi M."/>
            <person name="Nishi T."/>
            <person name="Shibahara T."/>
            <person name="Tanaka T."/>
            <person name="Ishii S."/>
            <person name="Yamamoto J."/>
            <person name="Saito K."/>
            <person name="Kawai Y."/>
            <person name="Isono Y."/>
            <person name="Nakamura Y."/>
            <person name="Nagahari K."/>
            <person name="Murakami K."/>
            <person name="Yasuda T."/>
            <person name="Iwayanagi T."/>
            <person name="Wagatsuma M."/>
            <person name="Shiratori A."/>
            <person name="Sudo H."/>
            <person name="Hosoiri T."/>
            <person name="Kaku Y."/>
            <person name="Kodaira H."/>
            <person name="Kondo H."/>
            <person name="Sugawara M."/>
            <person name="Takahashi M."/>
            <person name="Kanda K."/>
            <person name="Yokoi T."/>
            <person name="Furuya T."/>
            <person name="Kikkawa E."/>
            <person name="Omura Y."/>
            <person name="Abe K."/>
            <person name="Kamihara K."/>
            <person name="Katsuta N."/>
            <person name="Sato K."/>
            <person name="Tanikawa M."/>
            <person name="Yamazaki M."/>
            <person name="Ninomiya K."/>
            <person name="Ishibashi T."/>
            <person name="Yamashita H."/>
            <person name="Murakawa K."/>
            <person name="Fujimori K."/>
            <person name="Tanai H."/>
            <person name="Kimata M."/>
            <person name="Watanabe M."/>
            <person name="Hiraoka S."/>
            <person name="Chiba Y."/>
            <person name="Ishida S."/>
            <person name="Ono Y."/>
            <person name="Takiguchi S."/>
            <person name="Watanabe S."/>
            <person name="Yosida M."/>
            <person name="Hotuta T."/>
            <person name="Kusano J."/>
            <person name="Kanehori K."/>
            <person name="Takahashi-Fujii A."/>
            <person name="Hara H."/>
            <person name="Tanase T.-O."/>
            <person name="Nomura Y."/>
            <person name="Togiya S."/>
            <person name="Komai F."/>
            <person name="Hara R."/>
            <person name="Takeuchi K."/>
            <person name="Arita M."/>
            <person name="Imose N."/>
            <person name="Musashino K."/>
            <person name="Yuuki H."/>
            <person name="Oshima A."/>
            <person name="Sasaki N."/>
            <person name="Aotsuka S."/>
            <person name="Yoshikawa Y."/>
            <person name="Matsunawa H."/>
            <person name="Ichihara T."/>
            <person name="Shiohata N."/>
            <person name="Sano S."/>
            <person name="Moriya S."/>
            <person name="Momiyama H."/>
            <person name="Satoh N."/>
            <person name="Takami S."/>
            <person name="Terashima Y."/>
            <person name="Suzuki O."/>
            <person name="Nakagawa S."/>
            <person name="Senoh A."/>
            <person name="Mizoguchi H."/>
            <person name="Goto Y."/>
            <person name="Shimizu F."/>
            <person name="Wakebe H."/>
            <person name="Hishigaki H."/>
            <person name="Watanabe T."/>
            <person name="Sugiyama A."/>
            <person name="Takemoto M."/>
            <person name="Kawakami B."/>
            <person name="Yamazaki M."/>
            <person name="Watanabe K."/>
            <person name="Kumagai A."/>
            <person name="Itakura S."/>
            <person name="Fukuzumi Y."/>
            <person name="Fujimori Y."/>
            <person name="Komiyama M."/>
            <person name="Tashiro H."/>
            <person name="Tanigami A."/>
            <person name="Fujiwara T."/>
            <person name="Ono T."/>
            <person name="Yamada K."/>
            <person name="Fujii Y."/>
            <person name="Ozaki K."/>
            <person name="Hirao M."/>
            <person name="Ohmori Y."/>
            <person name="Kawabata A."/>
            <person name="Hikiji T."/>
            <person name="Kobatake N."/>
            <person name="Inagaki H."/>
            <person name="Ikema Y."/>
            <person name="Okamoto S."/>
            <person name="Okitani R."/>
            <person name="Kawakami T."/>
            <person name="Noguchi S."/>
            <person name="Itoh T."/>
            <person name="Shigeta K."/>
            <person name="Senba T."/>
            <person name="Matsumura K."/>
            <person name="Nakajima Y."/>
            <person name="Mizuno T."/>
            <person name="Morinaga M."/>
            <person name="Sasaki M."/>
            <person name="Togashi T."/>
            <person name="Oyama M."/>
            <person name="Hata H."/>
            <person name="Watanabe M."/>
            <person name="Komatsu T."/>
            <person name="Mizushima-Sugano J."/>
            <person name="Satoh T."/>
            <person name="Shirai Y."/>
            <person name="Takahashi Y."/>
            <person name="Nakagawa K."/>
            <person name="Okumura K."/>
            <person name="Nagase T."/>
            <person name="Nomura N."/>
            <person name="Kikuchi H."/>
            <person name="Masuho Y."/>
            <person name="Yamashita R."/>
            <person name="Nakai K."/>
            <person name="Yada T."/>
            <person name="Nakamura Y."/>
            <person name="Ohara O."/>
            <person name="Isogai T."/>
            <person name="Sugano S."/>
        </authorList>
    </citation>
    <scope>NUCLEOTIDE SEQUENCE [LARGE SCALE MRNA] (ISOFORMS 2 AND 4)</scope>
    <source>
        <tissue>Lung</tissue>
        <tissue>Placenta</tissue>
    </source>
</reference>
<reference key="6">
    <citation type="journal article" date="2004" name="Genome Res.">
        <title>The status, quality, and expansion of the NIH full-length cDNA project: the Mammalian Gene Collection (MGC).</title>
        <authorList>
            <consortium name="The MGC Project Team"/>
        </authorList>
    </citation>
    <scope>NUCLEOTIDE SEQUENCE [LARGE SCALE MRNA] (ISOFORMS 1 AND 3)</scope>
    <source>
        <tissue>Brain</tissue>
        <tissue>Lung</tissue>
    </source>
</reference>
<reference key="7">
    <citation type="journal article" date="1998" name="Am. J. Pathol.">
        <title>MEMD, a new cell adhesion molecule in metastasizing human melanoma cell lines, is identical to ALCAM (activated leukocyte cell adhesion molecule).</title>
        <authorList>
            <person name="Degen W.G."/>
            <person name="van Kempen L.C."/>
            <person name="Gijzen E.G."/>
            <person name="van Groningen J.J."/>
            <person name="van Kooyk Y."/>
            <person name="Bloemers H.P.J."/>
            <person name="Swart G.W."/>
        </authorList>
    </citation>
    <scope>NUCLEOTIDE SEQUENCE [MRNA] OF 2-583 (ISOFORM 1)</scope>
    <scope>TISSUE SPECIFICITY</scope>
</reference>
<reference key="8">
    <citation type="journal article" date="1996" name="Biochemistry">
        <title>Recognition of diverse proteins by members of the immunoglobulin superfamily: delineation of the receptor binding site in the human CD6 ligand ALCAM.</title>
        <authorList>
            <person name="Skonier J.E."/>
            <person name="Bowen M.A."/>
            <person name="Emswiler J."/>
            <person name="Aruffo A."/>
            <person name="Bajorath J."/>
        </authorList>
    </citation>
    <scope>DOMAIN CD6 BINDING</scope>
    <scope>INTERACTION WITH CD6</scope>
</reference>
<reference key="9">
    <citation type="journal article" date="2003" name="Nat. Biotechnol.">
        <title>Identification and quantification of N-linked glycoproteins using hydrazide chemistry, stable isotope labeling and mass spectrometry.</title>
        <authorList>
            <person name="Zhang H."/>
            <person name="Li X.-J."/>
            <person name="Martin D.B."/>
            <person name="Aebersold R."/>
        </authorList>
    </citation>
    <scope>GLYCOSYLATION AT ASN-91; ASN-167; ASN-480 AND ASN-499</scope>
</reference>
<reference key="10">
    <citation type="journal article" date="2004" name="Eur. J. Immunol.">
        <title>Frontline: Optimal T cell activation requires the engagement of CD6 and CD166.</title>
        <authorList>
            <person name="Hassan N.J."/>
            <person name="Barclay A.N."/>
            <person name="Brown M.H."/>
        </authorList>
    </citation>
    <scope>FUNCTION</scope>
    <scope>INTERACTION WITH CD6</scope>
    <scope>SUBUNIT</scope>
    <scope>SUBCELLULAR LOCATION</scope>
    <scope>TISSUE SPECIFICITY</scope>
</reference>
<reference key="11">
    <citation type="journal article" date="2004" name="J. Immunol.">
        <title>Relevance of CD6-mediated interactions in T cell activation and proliferation.</title>
        <authorList>
            <person name="Gimferrer I."/>
            <person name="Calvo M."/>
            <person name="Mittelbrunn M."/>
            <person name="Farnos M."/>
            <person name="Sarrias M.R."/>
            <person name="Enrich C."/>
            <person name="Vives J."/>
            <person name="Sanchez-Madrid F."/>
            <person name="Lozano F."/>
        </authorList>
    </citation>
    <scope>SUBCELLULAR LOCATION</scope>
</reference>
<reference key="12">
    <citation type="journal article" date="2005" name="J. Proteome Res.">
        <title>Human plasma N-glycoproteome analysis by immunoaffinity subtraction, hydrazide chemistry, and mass spectrometry.</title>
        <authorList>
            <person name="Liu T."/>
            <person name="Qian W.-J."/>
            <person name="Gritsenko M.A."/>
            <person name="Camp D.G. II"/>
            <person name="Monroe M.E."/>
            <person name="Moore R.J."/>
            <person name="Smith R.D."/>
        </authorList>
    </citation>
    <scope>GLYCOSYLATION [LARGE SCALE ANALYSIS] AT ASN-95; ASN-265 AND ASN-499</scope>
    <source>
        <tissue>Plasma</tissue>
    </source>
</reference>
<reference key="13">
    <citation type="journal article" date="2006" name="Blood">
        <title>Long-term engagement of CD6 and ALCAM is essential for T-cell proliferation induced by dendritic cells.</title>
        <authorList>
            <person name="Zimmerman A.W."/>
            <person name="Joosten B."/>
            <person name="Torensma R."/>
            <person name="Parnes J.R."/>
            <person name="van Leeuwen F.N."/>
            <person name="Figdor C.G."/>
        </authorList>
    </citation>
    <scope>FUNCTION</scope>
    <scope>SUBCELLULAR LOCATION</scope>
    <scope>INTERACTION WITH CD6</scope>
    <scope>SUBUNIT</scope>
    <scope>TISSUE SPECIFICITY</scope>
</reference>
<reference key="14">
    <citation type="journal article" date="2006" name="Mol. Cell. Biol.">
        <title>CD6 regulates T-cell responses through activation-dependent recruitment of the positive regulator SLP-76.</title>
        <authorList>
            <person name="Hassan N.J."/>
            <person name="Simmonds S.J."/>
            <person name="Clarkson N.G."/>
            <person name="Hanrahan S."/>
            <person name="Puklavec M.J."/>
            <person name="Bomb M."/>
            <person name="Barclay A.N."/>
            <person name="Brown M.H."/>
        </authorList>
    </citation>
    <scope>INTERACTION WITH CD6</scope>
</reference>
<reference key="15">
    <citation type="journal article" date="2009" name="J. Proteome Res.">
        <title>Glycoproteomics analysis of human liver tissue by combination of multiple enzyme digestion and hydrazide chemistry.</title>
        <authorList>
            <person name="Chen R."/>
            <person name="Jiang X."/>
            <person name="Sun D."/>
            <person name="Han G."/>
            <person name="Wang F."/>
            <person name="Ye M."/>
            <person name="Wang L."/>
            <person name="Zou H."/>
        </authorList>
    </citation>
    <scope>GLYCOSYLATION [LARGE SCALE ANALYSIS] AT ASN-91; ASN-95; ASN-457 AND ASN-480</scope>
    <source>
        <tissue>Liver</tissue>
    </source>
</reference>
<reference key="16">
    <citation type="journal article" date="2009" name="Nat. Biotechnol.">
        <title>Mass-spectrometric identification and relative quantification of N-linked cell surface glycoproteins.</title>
        <authorList>
            <person name="Wollscheid B."/>
            <person name="Bausch-Fluck D."/>
            <person name="Henderson C."/>
            <person name="O'Brien R."/>
            <person name="Bibel M."/>
            <person name="Schiess R."/>
            <person name="Aebersold R."/>
            <person name="Watts J.D."/>
        </authorList>
    </citation>
    <scope>GLYCOSYLATION [LARGE SCALE ANALYSIS] AT ASN-457</scope>
    <source>
        <tissue>Leukemic T-cell</tissue>
    </source>
</reference>
<reference key="17">
    <citation type="journal article" date="2011" name="BMC Syst. Biol.">
        <title>Initial characterization of the human central proteome.</title>
        <authorList>
            <person name="Burkard T.R."/>
            <person name="Planyavsky M."/>
            <person name="Kaupe I."/>
            <person name="Breitwieser F.P."/>
            <person name="Buerckstuemmer T."/>
            <person name="Bennett K.L."/>
            <person name="Superti-Furga G."/>
            <person name="Colinge J."/>
        </authorList>
    </citation>
    <scope>IDENTIFICATION BY MASS SPECTROMETRY [LARGE SCALE ANALYSIS]</scope>
</reference>
<reference key="18">
    <citation type="journal article" date="2013" name="FASEB J.">
        <title>Novel role for ALCAM in lymphatic network formation and function.</title>
        <authorList>
            <person name="Iolyeva M."/>
            <person name="Karaman S."/>
            <person name="Willrodt A.H."/>
            <person name="Weingartner S."/>
            <person name="Vigl B."/>
            <person name="Halin C."/>
        </authorList>
    </citation>
    <scope>FUNCTION</scope>
    <scope>TISSUE SPECIFICITY</scope>
    <scope>SUBCELLULAR LOCATION</scope>
    <scope>INDUCTION BY TNF AND IFNG</scope>
</reference>
<reference key="19">
    <citation type="journal article" date="2014" name="Blood">
        <title>CD166 regulates human and murine hematopoietic stem cells and the hematopoietic niche.</title>
        <authorList>
            <person name="Chitteti B.R."/>
            <person name="Kobayashi M."/>
            <person name="Cheng Y."/>
            <person name="Zhang H."/>
            <person name="Poteat B.A."/>
            <person name="Broxmeyer H.E."/>
            <person name="Pelus L.M."/>
            <person name="Hanenberg H."/>
            <person name="Zollman A."/>
            <person name="Kamocka M.M."/>
            <person name="Carlesso N."/>
            <person name="Cardoso A.A."/>
            <person name="Kacena M.A."/>
            <person name="Srour E.F."/>
        </authorList>
    </citation>
    <scope>FUNCTION</scope>
    <scope>TISSUE SPECIFICITY</scope>
    <scope>SUBCELLULAR LOCATION</scope>
</reference>
<reference key="20">
    <citation type="journal article" date="2014" name="FEBS Lett.">
        <title>Modulation of CD6 function through interaction with galectin-1 and -3.</title>
        <authorList>
            <person name="Escoda-Ferran C."/>
            <person name="Carrasco E."/>
            <person name="Caballero-Banos M."/>
            <person name="Miro-Julia C."/>
            <person name="Martinez-Florensa M."/>
            <person name="Consuegra-Fernandez M."/>
            <person name="Martinez V.G."/>
            <person name="Liu F.T."/>
            <person name="Lozano F."/>
        </authorList>
    </citation>
    <scope>INTERACTION WITH CD6; LGALS1 AND LGALS3</scope>
    <scope>GLYCOSYLATION</scope>
    <scope>FUNCTION</scope>
    <scope>SUBCELLULAR LOCATION</scope>
</reference>
<reference key="21">
    <citation type="journal article" date="2014" name="J. Proteomics">
        <title>An enzyme assisted RP-RPLC approach for in-depth analysis of human liver phosphoproteome.</title>
        <authorList>
            <person name="Bian Y."/>
            <person name="Song C."/>
            <person name="Cheng K."/>
            <person name="Dong M."/>
            <person name="Wang F."/>
            <person name="Huang J."/>
            <person name="Sun D."/>
            <person name="Wang L."/>
            <person name="Ye M."/>
            <person name="Zou H."/>
        </authorList>
    </citation>
    <scope>IDENTIFICATION BY MASS SPECTROMETRY [LARGE SCALE ANALYSIS]</scope>
    <source>
        <tissue>Liver</tissue>
    </source>
</reference>
<reference key="22">
    <citation type="journal article" date="2015" name="Proteomics">
        <title>N-terminome analysis of the human mitochondrial proteome.</title>
        <authorList>
            <person name="Vaca Jacome A.S."/>
            <person name="Rabilloud T."/>
            <person name="Schaeffer-Reiss C."/>
            <person name="Rompais M."/>
            <person name="Ayoub D."/>
            <person name="Lane L."/>
            <person name="Bairoch A."/>
            <person name="Van Dorsselaer A."/>
            <person name="Carapito C."/>
        </authorList>
    </citation>
    <scope>IDENTIFICATION BY MASS SPECTROMETRY [LARGE SCALE ANALYSIS]</scope>
</reference>
<reference key="23">
    <citation type="journal article" date="2018" name="J. Immunol.">
        <title>ILT3.Fc-CD166 Interaction Induces Inactivation of p70 S6 Kinase and Inhibits Tumor Cell Growth.</title>
        <authorList>
            <person name="Xu Z."/>
            <person name="Chang C.C."/>
            <person name="Li M."/>
            <person name="Zhang Q.Y."/>
            <person name="Vasilescu E.M."/>
            <person name="D'Agati V."/>
            <person name="Floratos A."/>
            <person name="Vlad G."/>
            <person name="Suciu-Foca N."/>
        </authorList>
    </citation>
    <scope>FUNCTION</scope>
</reference>
<reference key="24">
    <citation type="journal article" date="1995" name="Protein Sci.">
        <title>Molecular model of the N-terminal receptor-binding domain of the human CD6 ligand ALCAM.</title>
        <authorList>
            <person name="Bajorath J."/>
            <person name="Bowen M.A."/>
            <person name="Aruffo A."/>
        </authorList>
    </citation>
    <scope>3D-STRUCTURE MODELING OF 28-133</scope>
</reference>
<reference key="25">
    <citation type="journal article" date="2015" name="Structure">
        <title>Structures of CD6 and its ligand CD166 give insight into their interaction.</title>
        <authorList>
            <person name="Chappell P.E."/>
            <person name="Garner L.I."/>
            <person name="Yan J."/>
            <person name="Metcalfe C."/>
            <person name="Hatherley D."/>
            <person name="Johnson S."/>
            <person name="Robinson C.V."/>
            <person name="Lea S.M."/>
            <person name="Brown M.H."/>
        </authorList>
    </citation>
    <scope>X-RAY CRYSTALLOGRAPHY (1.86 ANGSTROMS)</scope>
    <scope>DISULFIDE BONDS</scope>
    <scope>INTERACTION WITH CD6</scope>
    <scope>SUBUNIT</scope>
</reference>
<keyword id="KW-0002">3D-structure</keyword>
<keyword id="KW-1064">Adaptive immunity</keyword>
<keyword id="KW-0025">Alternative splicing</keyword>
<keyword id="KW-0130">Cell adhesion</keyword>
<keyword id="KW-1003">Cell membrane</keyword>
<keyword id="KW-0966">Cell projection</keyword>
<keyword id="KW-0903">Direct protein sequencing</keyword>
<keyword id="KW-1015">Disulfide bond</keyword>
<keyword id="KW-0325">Glycoprotein</keyword>
<keyword id="KW-0391">Immunity</keyword>
<keyword id="KW-0393">Immunoglobulin domain</keyword>
<keyword id="KW-0472">Membrane</keyword>
<keyword id="KW-1267">Proteomics identification</keyword>
<keyword id="KW-1185">Reference proteome</keyword>
<keyword id="KW-0677">Repeat</keyword>
<keyword id="KW-0964">Secreted</keyword>
<keyword id="KW-0732">Signal</keyword>
<keyword id="KW-0812">Transmembrane</keyword>
<keyword id="KW-1133">Transmembrane helix</keyword>
<protein>
    <recommendedName>
        <fullName>CD166 antigen</fullName>
    </recommendedName>
    <alternativeName>
        <fullName>Activated leukocyte cell adhesion molecule</fullName>
    </alternativeName>
    <cdAntigenName>CD166</cdAntigenName>
</protein>
<sequence length="583" mass="65102">MESKGASSCRLLFCLLISATVFRPGLGWYTVNSAYGDTIIIPCRLDVPQNLMFGKWKYEKPDGSPVFIAFRSSTKKSVQYDDVPEYKDRLNLSENYTLSISNARISDEKRFVCMLVTEDNVFEAPTIVKVFKQPSKPEIVSKALFLETEQLKKLGDCISEDSYPDGNITWYRNGKVLHPLEGAVVIIFKKEMDPVTQLYTMTSTLEYKTTKADIQMPFTCSVTYYGPSGQKTIHSEQAVFDIYYPTEQVTIQVLPPKNAIKEGDNITLKCLGNGNPPPEEFLFYLPGQPEGIRSSNTYTLTDVRRNATGDYKCSLIDKKSMIASTAITVHYLDLSLNPSGEVTRQIGDALPVSCTISASRNATVVWMKDNIRLRSSPSFSSLHYQDAGNYVCETALQEVEGLKKRESLTLIVEGKPQIKMTKKTDPSGLSKTIICHVEGFPKPAIQWTITGSGSVINQTEESPYINGRYYSKIIISPEENVTLTCTAENQLERTVNSLNVSAISIPEHDEADEISDENREKVNDQAKLIVGIVVGLLLAALVAGVVYWLYMKKSKTASKHVNKDLGNMEENKKLEENNHKTEA</sequence>